<accession>B5VHD1</accession>
<reference key="1">
    <citation type="journal article" date="2008" name="FEMS Yeast Res.">
        <title>Comparative genome analysis of a Saccharomyces cerevisiae wine strain.</title>
        <authorList>
            <person name="Borneman A.R."/>
            <person name="Forgan A.H."/>
            <person name="Pretorius I.S."/>
            <person name="Chambers P.J."/>
        </authorList>
    </citation>
    <scope>NUCLEOTIDE SEQUENCE [LARGE SCALE GENOMIC DNA]</scope>
    <source>
        <strain>AWRI1631</strain>
    </source>
</reference>
<protein>
    <recommendedName>
        <fullName>Increased recombination centers protein 22</fullName>
    </recommendedName>
</protein>
<gene>
    <name type="primary">IRC22</name>
    <name type="ORF">AWRI1631_50660</name>
</gene>
<keyword id="KW-0256">Endoplasmic reticulum</keyword>
<keyword id="KW-0472">Membrane</keyword>
<keyword id="KW-0732">Signal</keyword>
<keyword id="KW-0812">Transmembrane</keyword>
<keyword id="KW-1133">Transmembrane helix</keyword>
<feature type="signal peptide" evidence="2">
    <location>
        <begin position="1"/>
        <end position="24"/>
    </location>
</feature>
<feature type="chain" id="PRO_0000399088" description="Increased recombination centers protein 22">
    <location>
        <begin position="25"/>
        <end position="225"/>
    </location>
</feature>
<feature type="topological domain" description="Lumenal" evidence="2">
    <location>
        <begin position="25"/>
        <end position="169"/>
    </location>
</feature>
<feature type="transmembrane region" description="Helical" evidence="2">
    <location>
        <begin position="170"/>
        <end position="190"/>
    </location>
</feature>
<feature type="topological domain" description="Cytoplasmic" evidence="2">
    <location>
        <begin position="191"/>
        <end position="225"/>
    </location>
</feature>
<feature type="region of interest" description="Disordered" evidence="3">
    <location>
        <begin position="203"/>
        <end position="225"/>
    </location>
</feature>
<feature type="compositionally biased region" description="Basic and acidic residues" evidence="3">
    <location>
        <begin position="212"/>
        <end position="225"/>
    </location>
</feature>
<name>IRC22_YEAS6</name>
<dbReference type="EMBL" id="ABSV01000646">
    <property type="protein sequence ID" value="EDZ72661.1"/>
    <property type="molecule type" value="Genomic_DNA"/>
</dbReference>
<dbReference type="OrthoDB" id="11791at4893"/>
<dbReference type="Proteomes" id="UP000008988">
    <property type="component" value="Unassembled WGS sequence"/>
</dbReference>
<dbReference type="GO" id="GO:0005789">
    <property type="term" value="C:endoplasmic reticulum membrane"/>
    <property type="evidence" value="ECO:0007669"/>
    <property type="project" value="UniProtKB-SubCell"/>
</dbReference>
<dbReference type="InterPro" id="IPR005595">
    <property type="entry name" value="TRAP_alpha"/>
</dbReference>
<dbReference type="Pfam" id="PF03896">
    <property type="entry name" value="TRAP_alpha"/>
    <property type="match status" value="1"/>
</dbReference>
<organism>
    <name type="scientific">Saccharomyces cerevisiae (strain AWRI1631)</name>
    <name type="common">Baker's yeast</name>
    <dbReference type="NCBI Taxonomy" id="545124"/>
    <lineage>
        <taxon>Eukaryota</taxon>
        <taxon>Fungi</taxon>
        <taxon>Dikarya</taxon>
        <taxon>Ascomycota</taxon>
        <taxon>Saccharomycotina</taxon>
        <taxon>Saccharomycetes</taxon>
        <taxon>Saccharomycetales</taxon>
        <taxon>Saccharomycetaceae</taxon>
        <taxon>Saccharomyces</taxon>
    </lineage>
</organism>
<sequence length="225" mass="25052">MRFFMLIGFNLLTALSSFCAAISANNSDNVEHEQEVAEAVAPPSINIEVKYDVVGKESENHDSFLEFYAEDTATLAYNVTNWEDTNITIFGVNGTIVTYPHGYPVADITGASIGPYEMEVNGTSKFGQDVTLNLPEGQYFLIPFLLASRFDEIVRIAAPPTLFEIVSPPISFFNPQFLSVQVIFLAIIGGVSYYYMKSKTNQRPSKKSATVKKVDESWLPETYKK</sequence>
<comment type="function">
    <text>Is probably involved in a pathway contributing to genomic integrity.</text>
</comment>
<comment type="subcellular location">
    <subcellularLocation>
        <location evidence="1">Endoplasmic reticulum membrane</location>
        <topology evidence="1">Single-pass type I membrane protein</topology>
    </subcellularLocation>
</comment>
<comment type="similarity">
    <text evidence="4">Belongs to the IRC22 family.</text>
</comment>
<proteinExistence type="inferred from homology"/>
<evidence type="ECO:0000250" key="1"/>
<evidence type="ECO:0000255" key="2"/>
<evidence type="ECO:0000256" key="3">
    <source>
        <dbReference type="SAM" id="MobiDB-lite"/>
    </source>
</evidence>
<evidence type="ECO:0000305" key="4"/>